<reference key="1">
    <citation type="journal article" date="2001" name="J. Biol. Chem.">
        <title>Molecular identification and characterization of novel human and mouse concentrative Na+-nucleoside cotransporter proteins (hCNT3 and mCNT3) broadly selective for purine and pyrimidine nucleosides (system cib).</title>
        <authorList>
            <person name="Ritzel M.W.L."/>
            <person name="Ng A.M.L."/>
            <person name="Yao S.Y.M."/>
            <person name="Graham K."/>
            <person name="Loewen S.K."/>
            <person name="Smith K.M."/>
            <person name="Ritzel R.G."/>
            <person name="Mowles D.A."/>
            <person name="Carpenter P."/>
            <person name="Chen X.-Z."/>
            <person name="Karpinski E."/>
            <person name="Hyde R.J."/>
            <person name="Baldwin S.A."/>
            <person name="Cass C.E."/>
            <person name="Young J.D."/>
        </authorList>
    </citation>
    <scope>NUCLEOTIDE SEQUENCE [MRNA] (ISOFORM 1)</scope>
    <scope>INDUCTION</scope>
    <scope>TISSUE SPECIFICITY</scope>
    <scope>BIOPHYSICOCHEMICAL PROPERTIES</scope>
    <scope>FUNCTION</scope>
    <scope>TRANSPORTER ACTIVITY</scope>
</reference>
<reference key="2">
    <citation type="journal article" date="2004" name="Nat. Genet.">
        <title>Complete sequencing and characterization of 21,243 full-length human cDNAs.</title>
        <authorList>
            <person name="Ota T."/>
            <person name="Suzuki Y."/>
            <person name="Nishikawa T."/>
            <person name="Otsuki T."/>
            <person name="Sugiyama T."/>
            <person name="Irie R."/>
            <person name="Wakamatsu A."/>
            <person name="Hayashi K."/>
            <person name="Sato H."/>
            <person name="Nagai K."/>
            <person name="Kimura K."/>
            <person name="Makita H."/>
            <person name="Sekine M."/>
            <person name="Obayashi M."/>
            <person name="Nishi T."/>
            <person name="Shibahara T."/>
            <person name="Tanaka T."/>
            <person name="Ishii S."/>
            <person name="Yamamoto J."/>
            <person name="Saito K."/>
            <person name="Kawai Y."/>
            <person name="Isono Y."/>
            <person name="Nakamura Y."/>
            <person name="Nagahari K."/>
            <person name="Murakami K."/>
            <person name="Yasuda T."/>
            <person name="Iwayanagi T."/>
            <person name="Wagatsuma M."/>
            <person name="Shiratori A."/>
            <person name="Sudo H."/>
            <person name="Hosoiri T."/>
            <person name="Kaku Y."/>
            <person name="Kodaira H."/>
            <person name="Kondo H."/>
            <person name="Sugawara M."/>
            <person name="Takahashi M."/>
            <person name="Kanda K."/>
            <person name="Yokoi T."/>
            <person name="Furuya T."/>
            <person name="Kikkawa E."/>
            <person name="Omura Y."/>
            <person name="Abe K."/>
            <person name="Kamihara K."/>
            <person name="Katsuta N."/>
            <person name="Sato K."/>
            <person name="Tanikawa M."/>
            <person name="Yamazaki M."/>
            <person name="Ninomiya K."/>
            <person name="Ishibashi T."/>
            <person name="Yamashita H."/>
            <person name="Murakawa K."/>
            <person name="Fujimori K."/>
            <person name="Tanai H."/>
            <person name="Kimata M."/>
            <person name="Watanabe M."/>
            <person name="Hiraoka S."/>
            <person name="Chiba Y."/>
            <person name="Ishida S."/>
            <person name="Ono Y."/>
            <person name="Takiguchi S."/>
            <person name="Watanabe S."/>
            <person name="Yosida M."/>
            <person name="Hotuta T."/>
            <person name="Kusano J."/>
            <person name="Kanehori K."/>
            <person name="Takahashi-Fujii A."/>
            <person name="Hara H."/>
            <person name="Tanase T.-O."/>
            <person name="Nomura Y."/>
            <person name="Togiya S."/>
            <person name="Komai F."/>
            <person name="Hara R."/>
            <person name="Takeuchi K."/>
            <person name="Arita M."/>
            <person name="Imose N."/>
            <person name="Musashino K."/>
            <person name="Yuuki H."/>
            <person name="Oshima A."/>
            <person name="Sasaki N."/>
            <person name="Aotsuka S."/>
            <person name="Yoshikawa Y."/>
            <person name="Matsunawa H."/>
            <person name="Ichihara T."/>
            <person name="Shiohata N."/>
            <person name="Sano S."/>
            <person name="Moriya S."/>
            <person name="Momiyama H."/>
            <person name="Satoh N."/>
            <person name="Takami S."/>
            <person name="Terashima Y."/>
            <person name="Suzuki O."/>
            <person name="Nakagawa S."/>
            <person name="Senoh A."/>
            <person name="Mizoguchi H."/>
            <person name="Goto Y."/>
            <person name="Shimizu F."/>
            <person name="Wakebe H."/>
            <person name="Hishigaki H."/>
            <person name="Watanabe T."/>
            <person name="Sugiyama A."/>
            <person name="Takemoto M."/>
            <person name="Kawakami B."/>
            <person name="Yamazaki M."/>
            <person name="Watanabe K."/>
            <person name="Kumagai A."/>
            <person name="Itakura S."/>
            <person name="Fukuzumi Y."/>
            <person name="Fujimori Y."/>
            <person name="Komiyama M."/>
            <person name="Tashiro H."/>
            <person name="Tanigami A."/>
            <person name="Fujiwara T."/>
            <person name="Ono T."/>
            <person name="Yamada K."/>
            <person name="Fujii Y."/>
            <person name="Ozaki K."/>
            <person name="Hirao M."/>
            <person name="Ohmori Y."/>
            <person name="Kawabata A."/>
            <person name="Hikiji T."/>
            <person name="Kobatake N."/>
            <person name="Inagaki H."/>
            <person name="Ikema Y."/>
            <person name="Okamoto S."/>
            <person name="Okitani R."/>
            <person name="Kawakami T."/>
            <person name="Noguchi S."/>
            <person name="Itoh T."/>
            <person name="Shigeta K."/>
            <person name="Senba T."/>
            <person name="Matsumura K."/>
            <person name="Nakajima Y."/>
            <person name="Mizuno T."/>
            <person name="Morinaga M."/>
            <person name="Sasaki M."/>
            <person name="Togashi T."/>
            <person name="Oyama M."/>
            <person name="Hata H."/>
            <person name="Watanabe M."/>
            <person name="Komatsu T."/>
            <person name="Mizushima-Sugano J."/>
            <person name="Satoh T."/>
            <person name="Shirai Y."/>
            <person name="Takahashi Y."/>
            <person name="Nakagawa K."/>
            <person name="Okumura K."/>
            <person name="Nagase T."/>
            <person name="Nomura N."/>
            <person name="Kikuchi H."/>
            <person name="Masuho Y."/>
            <person name="Yamashita R."/>
            <person name="Nakai K."/>
            <person name="Yada T."/>
            <person name="Nakamura Y."/>
            <person name="Ohara O."/>
            <person name="Isogai T."/>
            <person name="Sugano S."/>
        </authorList>
    </citation>
    <scope>NUCLEOTIDE SEQUENCE [LARGE SCALE MRNA] (ISOFORMS 1 AND 2)</scope>
    <scope>VARIANTS CYS-113; THR-366 AND PHE-513</scope>
    <source>
        <tissue>Trachea</tissue>
    </source>
</reference>
<reference key="3">
    <citation type="journal article" date="2004" name="Nature">
        <title>DNA sequence and analysis of human chromosome 9.</title>
        <authorList>
            <person name="Humphray S.J."/>
            <person name="Oliver K."/>
            <person name="Hunt A.R."/>
            <person name="Plumb R.W."/>
            <person name="Loveland J.E."/>
            <person name="Howe K.L."/>
            <person name="Andrews T.D."/>
            <person name="Searle S."/>
            <person name="Hunt S.E."/>
            <person name="Scott C.E."/>
            <person name="Jones M.C."/>
            <person name="Ainscough R."/>
            <person name="Almeida J.P."/>
            <person name="Ambrose K.D."/>
            <person name="Ashwell R.I.S."/>
            <person name="Babbage A.K."/>
            <person name="Babbage S."/>
            <person name="Bagguley C.L."/>
            <person name="Bailey J."/>
            <person name="Banerjee R."/>
            <person name="Barker D.J."/>
            <person name="Barlow K.F."/>
            <person name="Bates K."/>
            <person name="Beasley H."/>
            <person name="Beasley O."/>
            <person name="Bird C.P."/>
            <person name="Bray-Allen S."/>
            <person name="Brown A.J."/>
            <person name="Brown J.Y."/>
            <person name="Burford D."/>
            <person name="Burrill W."/>
            <person name="Burton J."/>
            <person name="Carder C."/>
            <person name="Carter N.P."/>
            <person name="Chapman J.C."/>
            <person name="Chen Y."/>
            <person name="Clarke G."/>
            <person name="Clark S.Y."/>
            <person name="Clee C.M."/>
            <person name="Clegg S."/>
            <person name="Collier R.E."/>
            <person name="Corby N."/>
            <person name="Crosier M."/>
            <person name="Cummings A.T."/>
            <person name="Davies J."/>
            <person name="Dhami P."/>
            <person name="Dunn M."/>
            <person name="Dutta I."/>
            <person name="Dyer L.W."/>
            <person name="Earthrowl M.E."/>
            <person name="Faulkner L."/>
            <person name="Fleming C.J."/>
            <person name="Frankish A."/>
            <person name="Frankland J.A."/>
            <person name="French L."/>
            <person name="Fricker D.G."/>
            <person name="Garner P."/>
            <person name="Garnett J."/>
            <person name="Ghori J."/>
            <person name="Gilbert J.G.R."/>
            <person name="Glison C."/>
            <person name="Grafham D.V."/>
            <person name="Gribble S."/>
            <person name="Griffiths C."/>
            <person name="Griffiths-Jones S."/>
            <person name="Grocock R."/>
            <person name="Guy J."/>
            <person name="Hall R.E."/>
            <person name="Hammond S."/>
            <person name="Harley J.L."/>
            <person name="Harrison E.S.I."/>
            <person name="Hart E.A."/>
            <person name="Heath P.D."/>
            <person name="Henderson C.D."/>
            <person name="Hopkins B.L."/>
            <person name="Howard P.J."/>
            <person name="Howden P.J."/>
            <person name="Huckle E."/>
            <person name="Johnson C."/>
            <person name="Johnson D."/>
            <person name="Joy A.A."/>
            <person name="Kay M."/>
            <person name="Keenan S."/>
            <person name="Kershaw J.K."/>
            <person name="Kimberley A.M."/>
            <person name="King A."/>
            <person name="Knights A."/>
            <person name="Laird G.K."/>
            <person name="Langford C."/>
            <person name="Lawlor S."/>
            <person name="Leongamornlert D.A."/>
            <person name="Leversha M."/>
            <person name="Lloyd C."/>
            <person name="Lloyd D.M."/>
            <person name="Lovell J."/>
            <person name="Martin S."/>
            <person name="Mashreghi-Mohammadi M."/>
            <person name="Matthews L."/>
            <person name="McLaren S."/>
            <person name="McLay K.E."/>
            <person name="McMurray A."/>
            <person name="Milne S."/>
            <person name="Nickerson T."/>
            <person name="Nisbett J."/>
            <person name="Nordsiek G."/>
            <person name="Pearce A.V."/>
            <person name="Peck A.I."/>
            <person name="Porter K.M."/>
            <person name="Pandian R."/>
            <person name="Pelan S."/>
            <person name="Phillimore B."/>
            <person name="Povey S."/>
            <person name="Ramsey Y."/>
            <person name="Rand V."/>
            <person name="Scharfe M."/>
            <person name="Sehra H.K."/>
            <person name="Shownkeen R."/>
            <person name="Sims S.K."/>
            <person name="Skuce C.D."/>
            <person name="Smith M."/>
            <person name="Steward C.A."/>
            <person name="Swarbreck D."/>
            <person name="Sycamore N."/>
            <person name="Tester J."/>
            <person name="Thorpe A."/>
            <person name="Tracey A."/>
            <person name="Tromans A."/>
            <person name="Thomas D.W."/>
            <person name="Wall M."/>
            <person name="Wallis J.M."/>
            <person name="West A.P."/>
            <person name="Whitehead S.L."/>
            <person name="Willey D.L."/>
            <person name="Williams S.A."/>
            <person name="Wilming L."/>
            <person name="Wray P.W."/>
            <person name="Young L."/>
            <person name="Ashurst J.L."/>
            <person name="Coulson A."/>
            <person name="Blocker H."/>
            <person name="Durbin R.M."/>
            <person name="Sulston J.E."/>
            <person name="Hubbard T."/>
            <person name="Jackson M.J."/>
            <person name="Bentley D.R."/>
            <person name="Beck S."/>
            <person name="Rogers J."/>
            <person name="Dunham I."/>
        </authorList>
    </citation>
    <scope>NUCLEOTIDE SEQUENCE [LARGE SCALE GENOMIC DNA]</scope>
</reference>
<reference key="4">
    <citation type="submission" date="2005-07" db="EMBL/GenBank/DDBJ databases">
        <authorList>
            <person name="Mural R.J."/>
            <person name="Istrail S."/>
            <person name="Sutton G.G."/>
            <person name="Florea L."/>
            <person name="Halpern A.L."/>
            <person name="Mobarry C.M."/>
            <person name="Lippert R."/>
            <person name="Walenz B."/>
            <person name="Shatkay H."/>
            <person name="Dew I."/>
            <person name="Miller J.R."/>
            <person name="Flanigan M.J."/>
            <person name="Edwards N.J."/>
            <person name="Bolanos R."/>
            <person name="Fasulo D."/>
            <person name="Halldorsson B.V."/>
            <person name="Hannenhalli S."/>
            <person name="Turner R."/>
            <person name="Yooseph S."/>
            <person name="Lu F."/>
            <person name="Nusskern D.R."/>
            <person name="Shue B.C."/>
            <person name="Zheng X.H."/>
            <person name="Zhong F."/>
            <person name="Delcher A.L."/>
            <person name="Huson D.H."/>
            <person name="Kravitz S.A."/>
            <person name="Mouchard L."/>
            <person name="Reinert K."/>
            <person name="Remington K.A."/>
            <person name="Clark A.G."/>
            <person name="Waterman M.S."/>
            <person name="Eichler E.E."/>
            <person name="Adams M.D."/>
            <person name="Hunkapiller M.W."/>
            <person name="Myers E.W."/>
            <person name="Venter J.C."/>
        </authorList>
    </citation>
    <scope>NUCLEOTIDE SEQUENCE [LARGE SCALE GENOMIC DNA]</scope>
</reference>
<reference key="5">
    <citation type="journal article" date="2004" name="Genome Res.">
        <title>The status, quality, and expansion of the NIH full-length cDNA project: the Mammalian Gene Collection (MGC).</title>
        <authorList>
            <consortium name="The MGC Project Team"/>
        </authorList>
    </citation>
    <scope>NUCLEOTIDE SEQUENCE [LARGE SCALE MRNA] (ISOFORM 1)</scope>
    <source>
        <tissue>Colon</tissue>
    </source>
</reference>
<reference key="6">
    <citation type="journal article" date="2005" name="Pharmacogenet. Genomics">
        <title>Identification and functional characterization of variants in human concentrative nucleoside transporter 3, hCNT3 (SLC28A3), arising from single nucleotide polymorphisms in coding regions of the hCNT3 gene.</title>
        <authorList>
            <person name="Damaraju S."/>
            <person name="Zhang J."/>
            <person name="Visser F."/>
            <person name="Tackaberry T."/>
            <person name="Dufour J."/>
            <person name="Smith K.M."/>
            <person name="Slugoski M."/>
            <person name="Ritzel M.W.L."/>
            <person name="Baldwin S.A."/>
            <person name="Young J.D."/>
            <person name="Cass C.E."/>
        </authorList>
    </citation>
    <scope>FUNCTION</scope>
    <scope>BIOPHYSICOCHEMICAL PROPERTIES</scope>
    <scope>VARIANTS ASN-5; PHE-131 AND PHE-513</scope>
</reference>
<reference key="7">
    <citation type="journal article" date="2006" name="Mol. Pharmacol.">
        <title>Electrophysiological characterization and modeling of the structure activity relationship of the human concentrative nucleoside transporter 3 (hCNT3).</title>
        <authorList>
            <person name="Hu H."/>
            <person name="Endres C.J."/>
            <person name="Chang C."/>
            <person name="Umapathy N.S."/>
            <person name="Lee E.-W."/>
            <person name="Fei Y.-J."/>
            <person name="Itagaki S."/>
            <person name="Swaan P.W."/>
            <person name="Ganapathy V."/>
            <person name="Unadkat J.D."/>
        </authorList>
    </citation>
    <scope>FUNCTION</scope>
</reference>
<reference key="8">
    <citation type="journal article" date="2007" name="Eur. J. Pharmacol.">
        <title>Ribavirin uptake by cultured human choriocarcinoma (BeWo) cells and Xenopus laevis oocytes expressing recombinant plasma membrane human nucleoside transporters.</title>
        <authorList>
            <person name="Yamamoto T."/>
            <person name="Kuniki K."/>
            <person name="Takekuma Y."/>
            <person name="Hirano T."/>
            <person name="Iseki K."/>
            <person name="Sugawara M."/>
        </authorList>
    </citation>
    <scope>FUNCTION</scope>
</reference>
<reference key="9">
    <citation type="journal article" date="2009" name="FASEB J.">
        <title>A splice variant of the SLC28A3 gene encodes a novel human concentrative nucleoside transporter-3 (hCNT3) protein localized in the endoplasmic reticulum.</title>
        <authorList>
            <person name="Errasti-Murugarren E."/>
            <person name="Molina-Arcas M."/>
            <person name="Casado F.J."/>
            <person name="Pastor-Anglada M."/>
        </authorList>
    </citation>
    <scope>SUBCELLULAR LOCATION</scope>
    <scope>ALTERNATIVE SPLICING</scope>
</reference>
<reference key="10">
    <citation type="journal article" date="2011" name="J. Biol. Chem.">
        <title>Nucleobase transport by human equilibrative nucleoside transporter 1 (hENT1).</title>
        <authorList>
            <person name="Yao S.Y."/>
            <person name="Ng A.M."/>
            <person name="Cass C.E."/>
            <person name="Baldwin S.A."/>
            <person name="Young J.D."/>
        </authorList>
    </citation>
    <scope>FUNCTION</scope>
    <scope>TRANSPORTER ACTIVITY</scope>
</reference>
<reference key="11">
    <citation type="journal article" date="2012" name="Am. J. Physiol.">
        <title>Functional analysis of the human concentrative nucleoside transporter-1 variant hCNT1S546P provides insight into the sodium-binding pocket.</title>
        <authorList>
            <person name="Cano-Soldado P."/>
            <person name="Gorraitz E."/>
            <person name="Errasti-Murugarren E."/>
            <person name="Casado F.J."/>
            <person name="Lostao M.P."/>
            <person name="Pastor-Anglada M."/>
        </authorList>
    </citation>
    <scope>FUNCTION</scope>
    <scope>SUBCELLULAR LOCATION</scope>
    <scope>MUTAGENESIS OF SER-568</scope>
</reference>
<reference evidence="17" key="12">
    <citation type="journal article" date="2020" name="PLoS Biol.">
        <title>Cryo-EM structure of the human concentrative nucleoside transporter CNT3.</title>
        <authorList>
            <person name="Zhou Y."/>
            <person name="Liao L."/>
            <person name="Wang C."/>
            <person name="Li J."/>
            <person name="Chi P."/>
            <person name="Xiao Q."/>
            <person name="Liu Q."/>
            <person name="Guo L."/>
            <person name="Sun L."/>
            <person name="Deng D."/>
        </authorList>
    </citation>
    <scope>STRUCTURE BY ELECTRON MICROSCOPY (3.60 ANGSTROMS) OF 70-691</scope>
</reference>
<reference key="13">
    <citation type="journal article" date="2005" name="Pharmacogenomics J.">
        <title>Functional analysis of genetic variants in the human concentrative nucleoside transporter 3 (CNT3; SLC28A3).</title>
        <authorList>
            <person name="Badagnani I."/>
            <person name="Chan W."/>
            <person name="Castro R.A."/>
            <person name="Brett C.M."/>
            <person name="Huang C.C."/>
            <person name="Stryke D."/>
            <person name="Kawamoto M."/>
            <person name="Johns S.J."/>
            <person name="Ferrin T.E."/>
            <person name="Carlson E.J."/>
            <person name="Burchard E.G."/>
            <person name="Giacomini K.M."/>
        </authorList>
    </citation>
    <scope>VARIANTS LYS-4; ASN-5; HIS-62; LYS-67; CYS-113; VAL-328; GLN-349; ARG-367; ILE-418 AND HIS-585</scope>
    <scope>CHARACTERIZATION OF VARIANT ARG-367</scope>
</reference>
<reference key="14">
    <citation type="journal article" date="2008" name="Mol. Pharmacol.">
        <title>Functional characterization of a nucleoside-derived drug transporter variant (hCNT3C602R) showing altered sodium-binding capacity.</title>
        <authorList>
            <person name="Errasti-Murugarren E."/>
            <person name="Cano-Soldado P."/>
            <person name="Pastor-Anglada M."/>
            <person name="Casado F.J."/>
        </authorList>
    </citation>
    <scope>VARIANT ARG-602</scope>
    <scope>CHARACTERIZATION OF VARIANT ARG-602</scope>
</reference>
<protein>
    <recommendedName>
        <fullName>Solute carrier family 28 member 3</fullName>
    </recommendedName>
    <alternativeName>
        <fullName evidence="13">Concentrative Na(+)-nucleoside cotransporter 3</fullName>
        <shortName evidence="13">CNT 3</shortName>
        <shortName evidence="13">hCNT3</shortName>
    </alternativeName>
</protein>
<organism>
    <name type="scientific">Homo sapiens</name>
    <name type="common">Human</name>
    <dbReference type="NCBI Taxonomy" id="9606"/>
    <lineage>
        <taxon>Eukaryota</taxon>
        <taxon>Metazoa</taxon>
        <taxon>Chordata</taxon>
        <taxon>Craniata</taxon>
        <taxon>Vertebrata</taxon>
        <taxon>Euteleostomi</taxon>
        <taxon>Mammalia</taxon>
        <taxon>Eutheria</taxon>
        <taxon>Euarchontoglires</taxon>
        <taxon>Primates</taxon>
        <taxon>Haplorrhini</taxon>
        <taxon>Catarrhini</taxon>
        <taxon>Hominidae</taxon>
        <taxon>Homo</taxon>
    </lineage>
</organism>
<comment type="function">
    <text evidence="2 5 6 7 10 11">Sodium-dependent, pyrimidine- and purine-selective (PubMed:11032837, PubMed:15861042, PubMed:16446384, PubMed:17140564, PubMed:21998139). Involved in the homeostasis of endogenous nucleosides (PubMed:11032837, PubMed:15861042). Exhibits the transport characteristics of the nucleoside transport system cib or N3 subtype (N3/cib) (with marked transport of both thymidine and inosine) (PubMed:11032837). Employs a 2:1 sodium/nucleoside ratio (PubMed:11032837). Transports uridine (PubMed:21795683). Also able to transport gemcitabine, 3'-azido-3'-deoxythymidine (AZT), ribavirin and 3-deazauridine (PubMed:11032837, PubMed:17140564).</text>
</comment>
<comment type="catalytic activity">
    <reaction evidence="2">
        <text>thymidine(out) + 2 Na(+)(out) = thymidine(in) + 2 Na(+)(in)</text>
        <dbReference type="Rhea" id="RHEA:69899"/>
        <dbReference type="ChEBI" id="CHEBI:17748"/>
        <dbReference type="ChEBI" id="CHEBI:29101"/>
    </reaction>
</comment>
<comment type="catalytic activity">
    <reaction evidence="2">
        <text>cytidine(out) + 2 Na(+)(out) = cytidine(in) + 2 Na(+)(in)</text>
        <dbReference type="Rhea" id="RHEA:69903"/>
        <dbReference type="ChEBI" id="CHEBI:17562"/>
        <dbReference type="ChEBI" id="CHEBI:29101"/>
    </reaction>
</comment>
<comment type="catalytic activity">
    <reaction evidence="2 10">
        <text>uridine(out) + 2 Na(+)(out) = uridine(in) + 2 Na(+)(in)</text>
        <dbReference type="Rhea" id="RHEA:69907"/>
        <dbReference type="ChEBI" id="CHEBI:16704"/>
        <dbReference type="ChEBI" id="CHEBI:29101"/>
    </reaction>
</comment>
<comment type="catalytic activity">
    <reaction evidence="2">
        <text>adenosine(out) + 2 Na(+)(out) = adenosine(in) + 2 Na(+)(in)</text>
        <dbReference type="Rhea" id="RHEA:69911"/>
        <dbReference type="ChEBI" id="CHEBI:16335"/>
        <dbReference type="ChEBI" id="CHEBI:29101"/>
    </reaction>
</comment>
<comment type="catalytic activity">
    <reaction evidence="2">
        <text>guanosine(out) + 2 Na(+)(out) = guanosine(in) + 2 Na(+)(in)</text>
        <dbReference type="Rhea" id="RHEA:69915"/>
        <dbReference type="ChEBI" id="CHEBI:16750"/>
        <dbReference type="ChEBI" id="CHEBI:29101"/>
    </reaction>
</comment>
<comment type="catalytic activity">
    <reaction evidence="2">
        <text>inosine(out) + 2 Na(+)(out) = inosine(in) + 2 Na(+)(in)</text>
        <dbReference type="Rhea" id="RHEA:69919"/>
        <dbReference type="ChEBI" id="CHEBI:17596"/>
        <dbReference type="ChEBI" id="CHEBI:29101"/>
    </reaction>
</comment>
<comment type="catalytic activity">
    <molecule>Isoform 1</molecule>
    <reaction evidence="12">
        <text>uridine(out) + 2 Na(+)(out) = uridine(in) + 2 Na(+)(in)</text>
        <dbReference type="Rhea" id="RHEA:69907"/>
        <dbReference type="ChEBI" id="CHEBI:16704"/>
        <dbReference type="ChEBI" id="CHEBI:29101"/>
    </reaction>
</comment>
<comment type="catalytic activity">
    <molecule>Isoform 2</molecule>
    <reaction evidence="12">
        <text>uridine(out) + 2 Na(+)(out) = uridine(in) + 2 Na(+)(in)</text>
        <dbReference type="Rhea" id="RHEA:69907"/>
        <dbReference type="ChEBI" id="CHEBI:16704"/>
        <dbReference type="ChEBI" id="CHEBI:29101"/>
    </reaction>
</comment>
<comment type="biophysicochemical properties">
    <kinetics>
        <KM evidence="2 5">21.6 uM for uridine</KM>
        <KM evidence="2 5">15.4 uM for cytidine</KM>
        <KM evidence="2 5">21.2 uM for thymidine</KM>
        <KM evidence="2 5">15.1 uM for adenosine</KM>
        <KM evidence="2 5">43 uM for guanosine</KM>
        <KM evidence="2 5">52.5 uM for inosine</KM>
        <Vmax evidence="2 5">25.8 pmol/min/mg enzyme for uridine uptake</Vmax>
        <Vmax evidence="2 5">32.8 pmol/min/mg enzyme for cytidine uptake</Vmax>
        <Vmax evidence="2 5">24.2 pmol/min/mg enzyme for thymidine uptake</Vmax>
        <Vmax evidence="2 5">30.4 pmol/min/mg enzyme for adenosine uptake</Vmax>
        <Vmax evidence="2 5">51.4 pmol/min/mg enzyme for guanosine uptake</Vmax>
        <Vmax evidence="2 5">44.8 pmol/min/mg enzyme for inosine uptake</Vmax>
    </kinetics>
</comment>
<comment type="subunit">
    <text evidence="12">Homotrimer.</text>
</comment>
<comment type="interaction">
    <interactant intactId="EBI-44446483">
        <id>Q9HAS3</id>
    </interactant>
    <interactant intactId="EBI-720805">
        <id>P56470</id>
        <label>LGALS4</label>
    </interactant>
    <organismsDiffer>false</organismsDiffer>
    <experiments>4</experiments>
</comment>
<comment type="subcellular location">
    <molecule>Isoform 1</molecule>
    <subcellularLocation>
        <location evidence="11">Cell membrane</location>
        <topology evidence="12">Multi-pass membrane protein</topology>
    </subcellularLocation>
</comment>
<comment type="subcellular location">
    <molecule>Isoform 2</molecule>
    <subcellularLocation>
        <location evidence="9">Endoplasmic reticulum membrane</location>
        <topology evidence="12">Multi-pass membrane protein</topology>
    </subcellularLocation>
</comment>
<comment type="alternative products">
    <event type="alternative splicing"/>
    <isoform>
        <id>Q9HAS3-1</id>
        <name>1</name>
        <sequence type="displayed"/>
    </isoform>
    <isoform>
        <id>Q9HAS3-2</id>
        <name>2</name>
        <name evidence="15">hCNT3ins</name>
        <sequence type="described" ref="VSP_053848"/>
    </isoform>
</comment>
<comment type="tissue specificity">
    <text evidence="2">Expressed in pancreas, bone marrow, trachea, mammary gland, liver, prostate, and regions of intestine, brain, lung, placenta, testis, kidney, and heart.</text>
</comment>
<comment type="induction">
    <text evidence="2">Up-regulated by phorbol myristate acetate (PMA) in HL-60 cells.</text>
</comment>
<comment type="miscellaneous">
    <molecule>Isoform 2</molecule>
    <text evidence="16">Exhibits a shorter half-life than isoform 1, degraded via a proteasome-dependent pathway.</text>
</comment>
<comment type="similarity">
    <text evidence="16">Belongs to the concentrative nucleoside transporter (CNT) (TC 2.A.41) family.</text>
</comment>
<dbReference type="EMBL" id="AF305210">
    <property type="protein sequence ID" value="AAG22551.1"/>
    <property type="molecule type" value="mRNA"/>
</dbReference>
<dbReference type="EMBL" id="AK292849">
    <property type="protein sequence ID" value="BAF85538.1"/>
    <property type="molecule type" value="mRNA"/>
</dbReference>
<dbReference type="EMBL" id="AK304406">
    <property type="protein sequence ID" value="BAG65240.1"/>
    <property type="molecule type" value="mRNA"/>
</dbReference>
<dbReference type="EMBL" id="AK314039">
    <property type="protein sequence ID" value="BAG36748.1"/>
    <property type="molecule type" value="mRNA"/>
</dbReference>
<dbReference type="EMBL" id="AL353787">
    <property type="status" value="NOT_ANNOTATED_CDS"/>
    <property type="molecule type" value="Genomic_DNA"/>
</dbReference>
<dbReference type="EMBL" id="AL356134">
    <property type="status" value="NOT_ANNOTATED_CDS"/>
    <property type="molecule type" value="Genomic_DNA"/>
</dbReference>
<dbReference type="EMBL" id="BC093821">
    <property type="protein sequence ID" value="AAH93821.1"/>
    <property type="molecule type" value="mRNA"/>
</dbReference>
<dbReference type="EMBL" id="BC093823">
    <property type="protein sequence ID" value="AAH93823.1"/>
    <property type="molecule type" value="mRNA"/>
</dbReference>
<dbReference type="EMBL" id="CH471089">
    <property type="protein sequence ID" value="EAW62686.1"/>
    <property type="molecule type" value="Genomic_DNA"/>
</dbReference>
<dbReference type="CCDS" id="CCDS6670.1">
    <molecule id="Q9HAS3-1"/>
</dbReference>
<dbReference type="RefSeq" id="NP_001186562.1">
    <molecule id="Q9HAS3-1"/>
    <property type="nucleotide sequence ID" value="NM_001199633.2"/>
</dbReference>
<dbReference type="RefSeq" id="NP_071410.1">
    <molecule id="Q9HAS3-1"/>
    <property type="nucleotide sequence ID" value="NM_022127.3"/>
</dbReference>
<dbReference type="PDB" id="6KSW">
    <property type="method" value="EM"/>
    <property type="resolution" value="3.60 A"/>
    <property type="chains" value="A/B/C=70-691"/>
</dbReference>
<dbReference type="PDBsum" id="6KSW"/>
<dbReference type="EMDB" id="EMD-0775"/>
<dbReference type="SMR" id="Q9HAS3"/>
<dbReference type="BioGRID" id="122045">
    <property type="interactions" value="2"/>
</dbReference>
<dbReference type="FunCoup" id="Q9HAS3">
    <property type="interactions" value="12"/>
</dbReference>
<dbReference type="IntAct" id="Q9HAS3">
    <property type="interactions" value="5"/>
</dbReference>
<dbReference type="STRING" id="9606.ENSP00000365413"/>
<dbReference type="BindingDB" id="Q9HAS3"/>
<dbReference type="ChEMBL" id="CHEMBL5707"/>
<dbReference type="DrugBank" id="DB00640">
    <property type="generic name" value="Adenosine"/>
</dbReference>
<dbReference type="DrugBank" id="DB00993">
    <property type="generic name" value="Azathioprine"/>
</dbReference>
<dbReference type="DrugBank" id="DB00242">
    <property type="generic name" value="Cladribine"/>
</dbReference>
<dbReference type="DrugBank" id="DB01073">
    <property type="generic name" value="Fludarabine"/>
</dbReference>
<dbReference type="DrugBank" id="DB00441">
    <property type="generic name" value="Gemcitabine"/>
</dbReference>
<dbReference type="DrugBank" id="DB04335">
    <property type="generic name" value="Inosine"/>
</dbReference>
<dbReference type="DrugBank" id="DB01033">
    <property type="generic name" value="Mercaptopurine"/>
</dbReference>
<dbReference type="DrugBank" id="DB00811">
    <property type="generic name" value="Ribavirin"/>
</dbReference>
<dbReference type="DrugBank" id="DB09327">
    <property type="generic name" value="Tegafur-uracil"/>
</dbReference>
<dbReference type="DrugBank" id="DB04485">
    <property type="generic name" value="Thymidine"/>
</dbReference>
<dbReference type="GuidetoPHARMACOLOGY" id="1116"/>
<dbReference type="TCDB" id="2.A.41.2.8">
    <property type="family name" value="the concentrative nucleoside transporter (cnt) family"/>
</dbReference>
<dbReference type="GlyGen" id="Q9HAS3">
    <property type="glycosylation" value="3 sites, 1 N-linked glycan (1 site), 1 O-linked glycan (2 sites)"/>
</dbReference>
<dbReference type="iPTMnet" id="Q9HAS3"/>
<dbReference type="PhosphoSitePlus" id="Q9HAS3"/>
<dbReference type="BioMuta" id="SLC28A3"/>
<dbReference type="DMDM" id="74752767"/>
<dbReference type="MassIVE" id="Q9HAS3"/>
<dbReference type="PaxDb" id="9606-ENSP00000365413"/>
<dbReference type="PeptideAtlas" id="Q9HAS3"/>
<dbReference type="ProteomicsDB" id="81424">
    <molecule id="Q9HAS3-1"/>
</dbReference>
<dbReference type="Antibodypedia" id="13126">
    <property type="antibodies" value="69 antibodies from 15 providers"/>
</dbReference>
<dbReference type="DNASU" id="64078"/>
<dbReference type="Ensembl" id="ENST00000376238.5">
    <molecule id="Q9HAS3-1"/>
    <property type="protein sequence ID" value="ENSP00000365413.4"/>
    <property type="gene ID" value="ENSG00000197506.8"/>
</dbReference>
<dbReference type="GeneID" id="64078"/>
<dbReference type="KEGG" id="hsa:64078"/>
<dbReference type="MANE-Select" id="ENST00000376238.5">
    <property type="protein sequence ID" value="ENSP00000365413.4"/>
    <property type="RefSeq nucleotide sequence ID" value="NM_001199633.2"/>
    <property type="RefSeq protein sequence ID" value="NP_001186562.1"/>
</dbReference>
<dbReference type="UCSC" id="uc010mpz.4">
    <molecule id="Q9HAS3-1"/>
    <property type="organism name" value="human"/>
</dbReference>
<dbReference type="AGR" id="HGNC:16484"/>
<dbReference type="CTD" id="64078"/>
<dbReference type="DisGeNET" id="64078"/>
<dbReference type="GeneCards" id="SLC28A3"/>
<dbReference type="HGNC" id="HGNC:16484">
    <property type="gene designation" value="SLC28A3"/>
</dbReference>
<dbReference type="HPA" id="ENSG00000197506">
    <property type="expression patterns" value="Tissue enhanced (choroid)"/>
</dbReference>
<dbReference type="MIM" id="608269">
    <property type="type" value="gene"/>
</dbReference>
<dbReference type="neXtProt" id="NX_Q9HAS3"/>
<dbReference type="OpenTargets" id="ENSG00000197506"/>
<dbReference type="PharmGKB" id="PA426"/>
<dbReference type="VEuPathDB" id="HostDB:ENSG00000197506"/>
<dbReference type="eggNOG" id="KOG3747">
    <property type="taxonomic scope" value="Eukaryota"/>
</dbReference>
<dbReference type="GeneTree" id="ENSGT00390000016025"/>
<dbReference type="HOGENOM" id="CLU_016813_3_0_1"/>
<dbReference type="InParanoid" id="Q9HAS3"/>
<dbReference type="OMA" id="ERKYDTV"/>
<dbReference type="OrthoDB" id="6075923at2759"/>
<dbReference type="PAN-GO" id="Q9HAS3">
    <property type="GO annotations" value="5 GO annotations based on evolutionary models"/>
</dbReference>
<dbReference type="PhylomeDB" id="Q9HAS3"/>
<dbReference type="TreeFam" id="TF314131"/>
<dbReference type="PathwayCommons" id="Q9HAS3"/>
<dbReference type="Reactome" id="R-HSA-83936">
    <property type="pathway name" value="Transport of nucleosides and free purine and pyrimidine bases across the plasma membrane"/>
</dbReference>
<dbReference type="Reactome" id="R-HSA-9748787">
    <property type="pathway name" value="Azathioprine ADME"/>
</dbReference>
<dbReference type="Reactome" id="R-HSA-9755088">
    <property type="pathway name" value="Ribavirin ADME"/>
</dbReference>
<dbReference type="SABIO-RK" id="Q9HAS3"/>
<dbReference type="BioGRID-ORCS" id="64078">
    <property type="hits" value="11 hits in 1148 CRISPR screens"/>
</dbReference>
<dbReference type="ChiTaRS" id="SLC28A3">
    <property type="organism name" value="human"/>
</dbReference>
<dbReference type="GenomeRNAi" id="64078"/>
<dbReference type="Pharos" id="Q9HAS3">
    <property type="development level" value="Tchem"/>
</dbReference>
<dbReference type="PRO" id="PR:Q9HAS3"/>
<dbReference type="Proteomes" id="UP000005640">
    <property type="component" value="Chromosome 9"/>
</dbReference>
<dbReference type="RNAct" id="Q9HAS3">
    <property type="molecule type" value="protein"/>
</dbReference>
<dbReference type="Bgee" id="ENSG00000197506">
    <property type="expression patterns" value="Expressed in cartilage tissue and 123 other cell types or tissues"/>
</dbReference>
<dbReference type="GO" id="GO:0031526">
    <property type="term" value="C:brush border membrane"/>
    <property type="evidence" value="ECO:0000250"/>
    <property type="project" value="ARUK-UCL"/>
</dbReference>
<dbReference type="GO" id="GO:0005789">
    <property type="term" value="C:endoplasmic reticulum membrane"/>
    <property type="evidence" value="ECO:0007669"/>
    <property type="project" value="UniProtKB-SubCell"/>
</dbReference>
<dbReference type="GO" id="GO:0005886">
    <property type="term" value="C:plasma membrane"/>
    <property type="evidence" value="ECO:0000318"/>
    <property type="project" value="GO_Central"/>
</dbReference>
<dbReference type="GO" id="GO:0005415">
    <property type="term" value="F:nucleoside:sodium symporter activity"/>
    <property type="evidence" value="ECO:0000304"/>
    <property type="project" value="Reactome"/>
</dbReference>
<dbReference type="GO" id="GO:0005345">
    <property type="term" value="F:purine nucleobase transmembrane transporter activity"/>
    <property type="evidence" value="ECO:0000303"/>
    <property type="project" value="ARUK-UCL"/>
</dbReference>
<dbReference type="GO" id="GO:0015390">
    <property type="term" value="F:purine-specific nucleoside:sodium symporter activity"/>
    <property type="evidence" value="ECO:0000318"/>
    <property type="project" value="GO_Central"/>
</dbReference>
<dbReference type="GO" id="GO:0015389">
    <property type="term" value="F:pyrimidine- and adenosine-specific:sodium symporter activity"/>
    <property type="evidence" value="ECO:0000318"/>
    <property type="project" value="GO_Central"/>
</dbReference>
<dbReference type="GO" id="GO:0015213">
    <property type="term" value="F:uridine transmembrane transporter activity"/>
    <property type="evidence" value="ECO:0000314"/>
    <property type="project" value="ARUK-UCL"/>
</dbReference>
<dbReference type="GO" id="GO:1901642">
    <property type="term" value="P:nucleoside transmembrane transport"/>
    <property type="evidence" value="ECO:0000314"/>
    <property type="project" value="ARUK-UCL"/>
</dbReference>
<dbReference type="GO" id="GO:1904823">
    <property type="term" value="P:purine nucleobase transmembrane transport"/>
    <property type="evidence" value="ECO:0000303"/>
    <property type="project" value="ARUK-UCL"/>
</dbReference>
<dbReference type="GO" id="GO:0015860">
    <property type="term" value="P:purine nucleoside transmembrane transport"/>
    <property type="evidence" value="ECO:0000318"/>
    <property type="project" value="GO_Central"/>
</dbReference>
<dbReference type="GO" id="GO:0015864">
    <property type="term" value="P:pyrimidine nucleoside transport"/>
    <property type="evidence" value="ECO:0000318"/>
    <property type="project" value="GO_Central"/>
</dbReference>
<dbReference type="GO" id="GO:0072531">
    <property type="term" value="P:pyrimidine-containing compound transmembrane transport"/>
    <property type="evidence" value="ECO:0000314"/>
    <property type="project" value="ARUK-UCL"/>
</dbReference>
<dbReference type="GO" id="GO:0015862">
    <property type="term" value="P:uridine transmembrane transport"/>
    <property type="evidence" value="ECO:0000314"/>
    <property type="project" value="ARUK-UCL"/>
</dbReference>
<dbReference type="GO" id="GO:0006805">
    <property type="term" value="P:xenobiotic metabolic process"/>
    <property type="evidence" value="ECO:0000304"/>
    <property type="project" value="Reactome"/>
</dbReference>
<dbReference type="GO" id="GO:0006855">
    <property type="term" value="P:xenobiotic transmembrane transport"/>
    <property type="evidence" value="ECO:0000304"/>
    <property type="project" value="Reactome"/>
</dbReference>
<dbReference type="InterPro" id="IPR008276">
    <property type="entry name" value="C_nuclsd_transpt"/>
</dbReference>
<dbReference type="InterPro" id="IPR018270">
    <property type="entry name" value="C_nuclsd_transpt_met_bac"/>
</dbReference>
<dbReference type="InterPro" id="IPR011657">
    <property type="entry name" value="CNT_C_dom"/>
</dbReference>
<dbReference type="InterPro" id="IPR002668">
    <property type="entry name" value="CNT_N_dom"/>
</dbReference>
<dbReference type="InterPro" id="IPR011642">
    <property type="entry name" value="Gate_dom"/>
</dbReference>
<dbReference type="NCBIfam" id="TIGR00804">
    <property type="entry name" value="nupC"/>
    <property type="match status" value="1"/>
</dbReference>
<dbReference type="PANTHER" id="PTHR10590">
    <property type="entry name" value="SODIUM/NUCLEOSIDE COTRANSPORTER"/>
    <property type="match status" value="1"/>
</dbReference>
<dbReference type="PANTHER" id="PTHR10590:SF4">
    <property type="entry name" value="SOLUTE CARRIER FAMILY 28 MEMBER 3"/>
    <property type="match status" value="1"/>
</dbReference>
<dbReference type="Pfam" id="PF07670">
    <property type="entry name" value="Gate"/>
    <property type="match status" value="1"/>
</dbReference>
<dbReference type="Pfam" id="PF07662">
    <property type="entry name" value="Nucleos_tra2_C"/>
    <property type="match status" value="1"/>
</dbReference>
<dbReference type="Pfam" id="PF01773">
    <property type="entry name" value="Nucleos_tra2_N"/>
    <property type="match status" value="1"/>
</dbReference>
<keyword id="KW-0002">3D-structure</keyword>
<keyword id="KW-0025">Alternative splicing</keyword>
<keyword id="KW-1003">Cell membrane</keyword>
<keyword id="KW-0256">Endoplasmic reticulum</keyword>
<keyword id="KW-0472">Membrane</keyword>
<keyword id="KW-1267">Proteomics identification</keyword>
<keyword id="KW-1185">Reference proteome</keyword>
<keyword id="KW-0769">Symport</keyword>
<keyword id="KW-0812">Transmembrane</keyword>
<keyword id="KW-1133">Transmembrane helix</keyword>
<keyword id="KW-0813">Transport</keyword>
<name>S28A3_HUMAN</name>
<feature type="chain" id="PRO_0000324146" description="Solute carrier family 28 member 3">
    <location>
        <begin position="1"/>
        <end position="691"/>
    </location>
</feature>
<feature type="topological domain" description="Cytoplasmic" evidence="16">
    <location>
        <begin position="1"/>
        <end position="102"/>
    </location>
</feature>
<feature type="transmembrane region" description="Helical; Name=TM1" evidence="12 17">
    <location>
        <begin position="103"/>
        <end position="123"/>
    </location>
</feature>
<feature type="topological domain" description="Extracellular" evidence="16">
    <location>
        <begin position="124"/>
        <end position="128"/>
    </location>
</feature>
<feature type="transmembrane region" description="Helical; Name=TM2" evidence="12 17">
    <location>
        <begin position="129"/>
        <end position="149"/>
    </location>
</feature>
<feature type="topological domain" description="Cytoplasmic" evidence="16">
    <location>
        <begin position="150"/>
        <end position="173"/>
    </location>
</feature>
<feature type="transmembrane region" description="Helical; Name=TM3" evidence="12 17">
    <location>
        <begin position="174"/>
        <end position="194"/>
    </location>
</feature>
<feature type="topological domain" description="Extracellular" evidence="16">
    <location>
        <begin position="195"/>
        <end position="197"/>
    </location>
</feature>
<feature type="transmembrane region" description="Helical; Name=TM4" evidence="12 17">
    <location>
        <begin position="198"/>
        <end position="219"/>
    </location>
</feature>
<feature type="topological domain" description="Cytoplasmic" evidence="16">
    <location>
        <begin position="220"/>
        <end position="227"/>
    </location>
</feature>
<feature type="transmembrane region" description="Helical; Name=TM5" evidence="12 17">
    <location>
        <begin position="228"/>
        <end position="247"/>
    </location>
</feature>
<feature type="topological domain" description="Extracellular" evidence="16">
    <location>
        <begin position="248"/>
        <end position="284"/>
    </location>
</feature>
<feature type="transmembrane region" description="Helical; Name=TM6" evidence="12 17">
    <location>
        <begin position="285"/>
        <end position="305"/>
    </location>
</feature>
<feature type="topological domain" description="Cytoplasmic" evidence="16">
    <location>
        <begin position="306"/>
        <end position="329"/>
    </location>
</feature>
<feature type="intramembrane region" description="Helical; Name=HP1" evidence="12 17">
    <location>
        <begin position="330"/>
        <end position="348"/>
    </location>
</feature>
<feature type="topological domain" description="Cytoplasmic" evidence="16">
    <location>
        <begin position="349"/>
        <end position="361"/>
    </location>
</feature>
<feature type="transmembrane region" description="Helical; Name=TM7" evidence="12 17">
    <location>
        <begin position="362"/>
        <end position="384"/>
    </location>
</feature>
<feature type="topological domain" description="Extracellular" evidence="16">
    <location>
        <begin position="385"/>
        <end position="386"/>
    </location>
</feature>
<feature type="transmembrane region" description="Helical; Name=TM8" evidence="12 17">
    <location>
        <begin position="387"/>
        <end position="408"/>
    </location>
</feature>
<feature type="topological domain" description="Cytoplasmic" evidence="16">
    <location>
        <begin position="409"/>
        <end position="443"/>
    </location>
</feature>
<feature type="transmembrane region" description="Helical; Name=TM9" evidence="12 17">
    <location>
        <begin position="444"/>
        <end position="469"/>
    </location>
</feature>
<feature type="topological domain" description="Extracellular" evidence="16">
    <location>
        <begin position="470"/>
        <end position="507"/>
    </location>
</feature>
<feature type="intramembrane region" description="Helical; Name=HP2" evidence="12 17">
    <location>
        <begin position="508"/>
        <end position="527"/>
    </location>
</feature>
<feature type="topological domain" description="Extracellular" evidence="16">
    <location>
        <begin position="528"/>
        <end position="566"/>
    </location>
</feature>
<feature type="transmembrane region" description="Helical; Name=TM10" evidence="12 17">
    <location>
        <begin position="567"/>
        <end position="577"/>
    </location>
</feature>
<feature type="topological domain" description="Cytoplasmic" evidence="16">
    <location>
        <begin position="578"/>
        <end position="590"/>
    </location>
</feature>
<feature type="transmembrane region" description="Helical; Name=TM11" evidence="12 17">
    <location>
        <begin position="591"/>
        <end position="613"/>
    </location>
</feature>
<feature type="topological domain" description="Extracellular" evidence="16">
    <location>
        <begin position="614"/>
        <end position="691"/>
    </location>
</feature>
<feature type="region of interest" description="Disordered" evidence="1">
    <location>
        <begin position="1"/>
        <end position="78"/>
    </location>
</feature>
<feature type="compositionally biased region" description="Low complexity" evidence="1">
    <location>
        <begin position="21"/>
        <end position="30"/>
    </location>
</feature>
<feature type="compositionally biased region" description="Polar residues" evidence="1">
    <location>
        <begin position="31"/>
        <end position="42"/>
    </location>
</feature>
<feature type="compositionally biased region" description="Basic and acidic residues" evidence="1">
    <location>
        <begin position="43"/>
        <end position="54"/>
    </location>
</feature>
<feature type="splice variant" id="VSP_053848" description="In isoform 2." evidence="14">
    <location>
        <begin position="1"/>
        <end position="69"/>
    </location>
</feature>
<feature type="sequence variant" id="VAR_039665" description="In dbSNP:rs11568401." evidence="4">
    <original>R</original>
    <variation>K</variation>
    <location>
        <position position="4"/>
    </location>
</feature>
<feature type="sequence variant" id="VAR_039666" description="In dbSNP:rs11568403." evidence="4 5">
    <original>S</original>
    <variation>N</variation>
    <location>
        <position position="5"/>
    </location>
</feature>
<feature type="sequence variant" id="VAR_039667" description="In dbSNP:rs45621433." evidence="4">
    <original>D</original>
    <variation>H</variation>
    <location>
        <position position="62"/>
    </location>
</feature>
<feature type="sequence variant" id="VAR_039668" description="In dbSNP:rs11568411." evidence="4">
    <original>R</original>
    <variation>K</variation>
    <location>
        <position position="67"/>
    </location>
</feature>
<feature type="sequence variant" id="VAR_039669" description="In dbSNP:rs10868138." evidence="3 4">
    <original>Y</original>
    <variation>C</variation>
    <location>
        <position position="113"/>
    </location>
</feature>
<feature type="sequence variant" id="VAR_039670" description="In dbSNP:rs1825664373." evidence="5">
    <original>L</original>
    <variation>F</variation>
    <location>
        <position position="131"/>
    </location>
</feature>
<feature type="sequence variant" id="VAR_039671" description="In dbSNP:rs11140503.">
    <original>P</original>
    <variation>Q</variation>
    <location>
        <position position="221"/>
    </location>
</feature>
<feature type="sequence variant" id="VAR_039672" description="In dbSNP:rs11568418." evidence="4">
    <original>I</original>
    <variation>V</variation>
    <location>
        <position position="328"/>
    </location>
</feature>
<feature type="sequence variant" id="VAR_039673" description="In dbSNP:rs45525131." evidence="4">
    <original>R</original>
    <variation>Q</variation>
    <location>
        <position position="349"/>
    </location>
</feature>
<feature type="sequence variant" id="VAR_070606" description="In dbSNP:rs140138960." evidence="3">
    <original>A</original>
    <variation>T</variation>
    <location>
        <position position="366"/>
    </location>
</feature>
<feature type="sequence variant" id="VAR_039674" description="Reduced transport of inosine and thymidine; dbSNP:rs11568388." evidence="4">
    <original>G</original>
    <variation>R</variation>
    <location>
        <position position="367"/>
    </location>
</feature>
<feature type="sequence variant" id="VAR_039675" description="In dbSNP:rs11568405." evidence="4">
    <original>L</original>
    <variation>I</variation>
    <location>
        <position position="418"/>
    </location>
</feature>
<feature type="sequence variant" id="VAR_039676" description="In dbSNP:rs56350726." evidence="3 5">
    <original>Y</original>
    <variation>F</variation>
    <location>
        <position position="513"/>
    </location>
</feature>
<feature type="sequence variant" id="VAR_039677" description="In dbSNP:rs11568398." evidence="4">
    <original>R</original>
    <variation>H</variation>
    <location>
        <position position="585"/>
    </location>
</feature>
<feature type="sequence variant" id="VAR_039678" description="Lower concentrative capacity and altered sodium binding capacity." evidence="8">
    <original>C</original>
    <variation>R</variation>
    <location>
        <position position="602"/>
    </location>
</feature>
<feature type="mutagenesis site" description="Decreased uridine transport. Normal localization to the cell membrane." evidence="11">
    <original>S</original>
    <variation>P</variation>
    <location>
        <position position="568"/>
    </location>
</feature>
<feature type="sequence conflict" description="In Ref. 2; BAG36748." evidence="16" ref="2">
    <original>I</original>
    <variation>V</variation>
    <location>
        <position position="251"/>
    </location>
</feature>
<feature type="sequence conflict" description="In Ref. 2; BAG36748." evidence="16" ref="2">
    <original>V</original>
    <variation>I</variation>
    <location>
        <position position="293"/>
    </location>
</feature>
<feature type="sequence conflict" description="In Ref. 2; BAG65240." evidence="16" ref="2">
    <original>F</original>
    <variation>L</variation>
    <location>
        <position position="505"/>
    </location>
</feature>
<feature type="sequence conflict" description="In Ref. 2; BAF85538." evidence="16" ref="2">
    <original>A</original>
    <variation>S</variation>
    <location>
        <position position="628"/>
    </location>
</feature>
<feature type="sequence conflict" description="In Ref. 2; BAG36748." evidence="16" ref="2">
    <original>K</original>
    <variation>E</variation>
    <location>
        <position position="639"/>
    </location>
</feature>
<gene>
    <name type="primary">SLC28A3</name>
    <name evidence="13" type="synonym">CNT3</name>
</gene>
<accession>Q9HAS3</accession>
<accession>A8K9Y4</accession>
<accession>B1AML0</accession>
<accession>B2RA51</accession>
<accession>B4E2S8</accession>
<accession>F5GYE3</accession>
<evidence type="ECO:0000256" key="1">
    <source>
        <dbReference type="SAM" id="MobiDB-lite"/>
    </source>
</evidence>
<evidence type="ECO:0000269" key="2">
    <source>
    </source>
</evidence>
<evidence type="ECO:0000269" key="3">
    <source>
    </source>
</evidence>
<evidence type="ECO:0000269" key="4">
    <source>
    </source>
</evidence>
<evidence type="ECO:0000269" key="5">
    <source>
    </source>
</evidence>
<evidence type="ECO:0000269" key="6">
    <source>
    </source>
</evidence>
<evidence type="ECO:0000269" key="7">
    <source>
    </source>
</evidence>
<evidence type="ECO:0000269" key="8">
    <source>
    </source>
</evidence>
<evidence type="ECO:0000269" key="9">
    <source>
    </source>
</evidence>
<evidence type="ECO:0000269" key="10">
    <source>
    </source>
</evidence>
<evidence type="ECO:0000269" key="11">
    <source>
    </source>
</evidence>
<evidence type="ECO:0000269" key="12">
    <source>
    </source>
</evidence>
<evidence type="ECO:0000303" key="13">
    <source>
    </source>
</evidence>
<evidence type="ECO:0000303" key="14">
    <source>
    </source>
</evidence>
<evidence type="ECO:0000303" key="15">
    <source>
    </source>
</evidence>
<evidence type="ECO:0000305" key="16"/>
<evidence type="ECO:0007744" key="17">
    <source>
        <dbReference type="PDB" id="6KSW"/>
    </source>
</evidence>
<sequence>MELRSTAAPRAEGYSNVGFQNEENFLENENTSGNNSIRSRAVQSREHTNTKQDEEQVTVEQDSPRNREHMEDDDEEMQQKGCLERRYDTVCGFCRKHKTTLRHIIWGILLAGYLVMVISACVLNFHRALPLFVITVAAIFFVVWDHLMAKYEHRIDEMLSPGRRLLNSHWFWLKWVIWSSLVLAVIFWLAFDTAKLGQQQLVSFGGLIMYIVLLFLFSKYPTRVYWRPVLWGIGLQFLLGLLILRTDPGFIAFDWLGRQVQTFLEYTDAGASFVFGEKYKDHFFAFKVLPIVVFFSTVMSMLYYLGLMQWIIRKVGWIMLVTTGSSPIESVVASGNIFVGQTESPLLVRPYLPYITKSELHAIMTAGFSTIAGSVLGAYISFGVPSSHLLTASVMSAPASLAAAKLFWPETEKPKITLKNAMKMESGDSGNLLEAATQGASSSISLVANIAVNLIAFLALLSFMNSALSWFGNMFDYPQLSFELICSYIFMPFSFMMGVEWQDSFMVARLIGYKTFFNEFVAYEHLSKWIHLRKEGGPKFVNGVQQYISIRSEIIATYALCGFANIGSLGIVIGGLTSMAPSRKRDIASGAVRALIAGTVACFMTACIAGILSSTPVDINCHHVLENAFNSTFPGNTTKVIACCQSLLSSTVAKGPGEVIPGGNHSLYSLKGCCTLLNPSTFNCNGISNTF</sequence>
<proteinExistence type="evidence at protein level"/>